<proteinExistence type="inferred from homology"/>
<accession>Q8D3A7</accession>
<name>KTHY_WIGBR</name>
<sequence>MIKSKFIVIEGLEGSGKTNAISKIVNLLNKQGIKNVIFTREPGGTPLAESLRTLIKEGVGYEKITDNAELLMIYAARIQLVESVIKPALENGSWVVGDRHDLSSLAYQGGGRKIDTKILKMLREVFLRDFYPDLTFYLDIPPIMGLARIRARATVRAQIRDKVNKIKRNHSHDIKNALDRIEVEPISFFDRTRKKYKELASKNEKIITIDASKSLELVNKEIKHQLLKWLKKQI</sequence>
<keyword id="KW-0067">ATP-binding</keyword>
<keyword id="KW-0418">Kinase</keyword>
<keyword id="KW-0545">Nucleotide biosynthesis</keyword>
<keyword id="KW-0547">Nucleotide-binding</keyword>
<keyword id="KW-1185">Reference proteome</keyword>
<keyword id="KW-0808">Transferase</keyword>
<organism>
    <name type="scientific">Wigglesworthia glossinidia brevipalpis</name>
    <dbReference type="NCBI Taxonomy" id="36870"/>
    <lineage>
        <taxon>Bacteria</taxon>
        <taxon>Pseudomonadati</taxon>
        <taxon>Pseudomonadota</taxon>
        <taxon>Gammaproteobacteria</taxon>
        <taxon>Enterobacterales</taxon>
        <taxon>Erwiniaceae</taxon>
        <taxon>Wigglesworthia</taxon>
    </lineage>
</organism>
<protein>
    <recommendedName>
        <fullName evidence="1">Thymidylate kinase</fullName>
        <ecNumber evidence="1">2.7.4.9</ecNumber>
    </recommendedName>
    <alternativeName>
        <fullName evidence="1">dTMP kinase</fullName>
    </alternativeName>
</protein>
<evidence type="ECO:0000255" key="1">
    <source>
        <dbReference type="HAMAP-Rule" id="MF_00165"/>
    </source>
</evidence>
<feature type="chain" id="PRO_0000155372" description="Thymidylate kinase">
    <location>
        <begin position="1"/>
        <end position="234"/>
    </location>
</feature>
<feature type="binding site" evidence="1">
    <location>
        <begin position="11"/>
        <end position="18"/>
    </location>
    <ligand>
        <name>ATP</name>
        <dbReference type="ChEBI" id="CHEBI:30616"/>
    </ligand>
</feature>
<reference key="1">
    <citation type="journal article" date="2002" name="Nat. Genet.">
        <title>Genome sequence of the endocellular obligate symbiont of tsetse flies, Wigglesworthia glossinidia.</title>
        <authorList>
            <person name="Akman L."/>
            <person name="Yamashita A."/>
            <person name="Watanabe H."/>
            <person name="Oshima K."/>
            <person name="Shiba T."/>
            <person name="Hattori M."/>
            <person name="Aksoy S."/>
        </authorList>
    </citation>
    <scope>NUCLEOTIDE SEQUENCE [LARGE SCALE GENOMIC DNA]</scope>
</reference>
<gene>
    <name evidence="1" type="primary">tmk</name>
    <name type="ordered locus">WIGBR0940</name>
</gene>
<comment type="function">
    <text evidence="1">Phosphorylation of dTMP to form dTDP in both de novo and salvage pathways of dTTP synthesis.</text>
</comment>
<comment type="catalytic activity">
    <reaction evidence="1">
        <text>dTMP + ATP = dTDP + ADP</text>
        <dbReference type="Rhea" id="RHEA:13517"/>
        <dbReference type="ChEBI" id="CHEBI:30616"/>
        <dbReference type="ChEBI" id="CHEBI:58369"/>
        <dbReference type="ChEBI" id="CHEBI:63528"/>
        <dbReference type="ChEBI" id="CHEBI:456216"/>
        <dbReference type="EC" id="2.7.4.9"/>
    </reaction>
</comment>
<comment type="similarity">
    <text evidence="1">Belongs to the thymidylate kinase family.</text>
</comment>
<dbReference type="EC" id="2.7.4.9" evidence="1"/>
<dbReference type="EMBL" id="BA000021">
    <property type="protein sequence ID" value="BAC24240.1"/>
    <property type="molecule type" value="Genomic_DNA"/>
</dbReference>
<dbReference type="SMR" id="Q8D3A7"/>
<dbReference type="STRING" id="36870.gene:10368572"/>
<dbReference type="KEGG" id="wbr:tmk"/>
<dbReference type="eggNOG" id="COG0125">
    <property type="taxonomic scope" value="Bacteria"/>
</dbReference>
<dbReference type="HOGENOM" id="CLU_049131_0_1_6"/>
<dbReference type="OrthoDB" id="9774907at2"/>
<dbReference type="Proteomes" id="UP000000562">
    <property type="component" value="Chromosome"/>
</dbReference>
<dbReference type="GO" id="GO:0005829">
    <property type="term" value="C:cytosol"/>
    <property type="evidence" value="ECO:0007669"/>
    <property type="project" value="TreeGrafter"/>
</dbReference>
<dbReference type="GO" id="GO:0005524">
    <property type="term" value="F:ATP binding"/>
    <property type="evidence" value="ECO:0007669"/>
    <property type="project" value="UniProtKB-UniRule"/>
</dbReference>
<dbReference type="GO" id="GO:0004798">
    <property type="term" value="F:dTMP kinase activity"/>
    <property type="evidence" value="ECO:0007669"/>
    <property type="project" value="UniProtKB-UniRule"/>
</dbReference>
<dbReference type="GO" id="GO:0006233">
    <property type="term" value="P:dTDP biosynthetic process"/>
    <property type="evidence" value="ECO:0007669"/>
    <property type="project" value="InterPro"/>
</dbReference>
<dbReference type="GO" id="GO:0006235">
    <property type="term" value="P:dTTP biosynthetic process"/>
    <property type="evidence" value="ECO:0007669"/>
    <property type="project" value="UniProtKB-UniRule"/>
</dbReference>
<dbReference type="GO" id="GO:0006227">
    <property type="term" value="P:dUDP biosynthetic process"/>
    <property type="evidence" value="ECO:0007669"/>
    <property type="project" value="TreeGrafter"/>
</dbReference>
<dbReference type="CDD" id="cd01672">
    <property type="entry name" value="TMPK"/>
    <property type="match status" value="1"/>
</dbReference>
<dbReference type="FunFam" id="3.40.50.300:FF:000225">
    <property type="entry name" value="Thymidylate kinase"/>
    <property type="match status" value="1"/>
</dbReference>
<dbReference type="Gene3D" id="3.40.50.300">
    <property type="entry name" value="P-loop containing nucleotide triphosphate hydrolases"/>
    <property type="match status" value="1"/>
</dbReference>
<dbReference type="HAMAP" id="MF_00165">
    <property type="entry name" value="Thymidylate_kinase"/>
    <property type="match status" value="1"/>
</dbReference>
<dbReference type="InterPro" id="IPR027417">
    <property type="entry name" value="P-loop_NTPase"/>
</dbReference>
<dbReference type="InterPro" id="IPR039430">
    <property type="entry name" value="Thymidylate_kin-like_dom"/>
</dbReference>
<dbReference type="InterPro" id="IPR018095">
    <property type="entry name" value="Thymidylate_kin_CS"/>
</dbReference>
<dbReference type="InterPro" id="IPR018094">
    <property type="entry name" value="Thymidylate_kinase"/>
</dbReference>
<dbReference type="NCBIfam" id="TIGR00041">
    <property type="entry name" value="DTMP_kinase"/>
    <property type="match status" value="1"/>
</dbReference>
<dbReference type="PANTHER" id="PTHR10344">
    <property type="entry name" value="THYMIDYLATE KINASE"/>
    <property type="match status" value="1"/>
</dbReference>
<dbReference type="PANTHER" id="PTHR10344:SF4">
    <property type="entry name" value="UMP-CMP KINASE 2, MITOCHONDRIAL"/>
    <property type="match status" value="1"/>
</dbReference>
<dbReference type="Pfam" id="PF02223">
    <property type="entry name" value="Thymidylate_kin"/>
    <property type="match status" value="2"/>
</dbReference>
<dbReference type="SUPFAM" id="SSF52540">
    <property type="entry name" value="P-loop containing nucleoside triphosphate hydrolases"/>
    <property type="match status" value="1"/>
</dbReference>
<dbReference type="PROSITE" id="PS01331">
    <property type="entry name" value="THYMIDYLATE_KINASE"/>
    <property type="match status" value="1"/>
</dbReference>